<dbReference type="EC" id="2.7.7.3" evidence="1"/>
<dbReference type="EMBL" id="CP000627">
    <property type="protein sequence ID" value="ABQ19917.1"/>
    <property type="molecule type" value="Genomic_DNA"/>
</dbReference>
<dbReference type="EMBL" id="CP001235">
    <property type="protein sequence ID" value="ACP08279.1"/>
    <property type="molecule type" value="Genomic_DNA"/>
</dbReference>
<dbReference type="RefSeq" id="WP_000078888.1">
    <property type="nucleotide sequence ID" value="NZ_JAACZH010000028.1"/>
</dbReference>
<dbReference type="SMR" id="A5F408"/>
<dbReference type="KEGG" id="vco:VC0395_A2603"/>
<dbReference type="KEGG" id="vcr:VC395_0254"/>
<dbReference type="PATRIC" id="fig|345073.21.peg.243"/>
<dbReference type="eggNOG" id="COG0669">
    <property type="taxonomic scope" value="Bacteria"/>
</dbReference>
<dbReference type="HOGENOM" id="CLU_100149_0_1_6"/>
<dbReference type="OrthoDB" id="9806661at2"/>
<dbReference type="UniPathway" id="UPA00241">
    <property type="reaction ID" value="UER00355"/>
</dbReference>
<dbReference type="Proteomes" id="UP000000249">
    <property type="component" value="Chromosome 2"/>
</dbReference>
<dbReference type="GO" id="GO:0005737">
    <property type="term" value="C:cytoplasm"/>
    <property type="evidence" value="ECO:0007669"/>
    <property type="project" value="UniProtKB-SubCell"/>
</dbReference>
<dbReference type="GO" id="GO:0005524">
    <property type="term" value="F:ATP binding"/>
    <property type="evidence" value="ECO:0007669"/>
    <property type="project" value="UniProtKB-KW"/>
</dbReference>
<dbReference type="GO" id="GO:0004595">
    <property type="term" value="F:pantetheine-phosphate adenylyltransferase activity"/>
    <property type="evidence" value="ECO:0007669"/>
    <property type="project" value="UniProtKB-UniRule"/>
</dbReference>
<dbReference type="GO" id="GO:0015937">
    <property type="term" value="P:coenzyme A biosynthetic process"/>
    <property type="evidence" value="ECO:0007669"/>
    <property type="project" value="UniProtKB-UniRule"/>
</dbReference>
<dbReference type="CDD" id="cd02163">
    <property type="entry name" value="PPAT"/>
    <property type="match status" value="1"/>
</dbReference>
<dbReference type="FunFam" id="3.40.50.620:FF:000012">
    <property type="entry name" value="Phosphopantetheine adenylyltransferase"/>
    <property type="match status" value="1"/>
</dbReference>
<dbReference type="Gene3D" id="3.40.50.620">
    <property type="entry name" value="HUPs"/>
    <property type="match status" value="1"/>
</dbReference>
<dbReference type="HAMAP" id="MF_00151">
    <property type="entry name" value="PPAT_bact"/>
    <property type="match status" value="1"/>
</dbReference>
<dbReference type="InterPro" id="IPR004821">
    <property type="entry name" value="Cyt_trans-like"/>
</dbReference>
<dbReference type="InterPro" id="IPR001980">
    <property type="entry name" value="PPAT"/>
</dbReference>
<dbReference type="InterPro" id="IPR014729">
    <property type="entry name" value="Rossmann-like_a/b/a_fold"/>
</dbReference>
<dbReference type="NCBIfam" id="TIGR01510">
    <property type="entry name" value="coaD_prev_kdtB"/>
    <property type="match status" value="1"/>
</dbReference>
<dbReference type="NCBIfam" id="TIGR00125">
    <property type="entry name" value="cyt_tran_rel"/>
    <property type="match status" value="1"/>
</dbReference>
<dbReference type="PANTHER" id="PTHR21342">
    <property type="entry name" value="PHOSPHOPANTETHEINE ADENYLYLTRANSFERASE"/>
    <property type="match status" value="1"/>
</dbReference>
<dbReference type="PANTHER" id="PTHR21342:SF1">
    <property type="entry name" value="PHOSPHOPANTETHEINE ADENYLYLTRANSFERASE"/>
    <property type="match status" value="1"/>
</dbReference>
<dbReference type="Pfam" id="PF01467">
    <property type="entry name" value="CTP_transf_like"/>
    <property type="match status" value="1"/>
</dbReference>
<dbReference type="PRINTS" id="PR01020">
    <property type="entry name" value="LPSBIOSNTHSS"/>
</dbReference>
<dbReference type="SUPFAM" id="SSF52374">
    <property type="entry name" value="Nucleotidylyl transferase"/>
    <property type="match status" value="1"/>
</dbReference>
<organism>
    <name type="scientific">Vibrio cholerae serotype O1 (strain ATCC 39541 / Classical Ogawa 395 / O395)</name>
    <dbReference type="NCBI Taxonomy" id="345073"/>
    <lineage>
        <taxon>Bacteria</taxon>
        <taxon>Pseudomonadati</taxon>
        <taxon>Pseudomonadota</taxon>
        <taxon>Gammaproteobacteria</taxon>
        <taxon>Vibrionales</taxon>
        <taxon>Vibrionaceae</taxon>
        <taxon>Vibrio</taxon>
    </lineage>
</organism>
<evidence type="ECO:0000255" key="1">
    <source>
        <dbReference type="HAMAP-Rule" id="MF_00151"/>
    </source>
</evidence>
<proteinExistence type="inferred from homology"/>
<keyword id="KW-0067">ATP-binding</keyword>
<keyword id="KW-0173">Coenzyme A biosynthesis</keyword>
<keyword id="KW-0963">Cytoplasm</keyword>
<keyword id="KW-0460">Magnesium</keyword>
<keyword id="KW-0547">Nucleotide-binding</keyword>
<keyword id="KW-0548">Nucleotidyltransferase</keyword>
<keyword id="KW-0808">Transferase</keyword>
<gene>
    <name evidence="1" type="primary">coaD</name>
    <name type="synonym">kdtB</name>
    <name type="ordered locus">VC0395_A2603</name>
    <name type="ordered locus">VC395_0254</name>
</gene>
<reference key="1">
    <citation type="submission" date="2007-03" db="EMBL/GenBank/DDBJ databases">
        <authorList>
            <person name="Heidelberg J."/>
        </authorList>
    </citation>
    <scope>NUCLEOTIDE SEQUENCE [LARGE SCALE GENOMIC DNA]</scope>
    <source>
        <strain>ATCC 39541 / Classical Ogawa 395 / O395</strain>
    </source>
</reference>
<reference key="2">
    <citation type="journal article" date="2008" name="PLoS ONE">
        <title>A recalibrated molecular clock and independent origins for the cholera pandemic clones.</title>
        <authorList>
            <person name="Feng L."/>
            <person name="Reeves P.R."/>
            <person name="Lan R."/>
            <person name="Ren Y."/>
            <person name="Gao C."/>
            <person name="Zhou Z."/>
            <person name="Ren Y."/>
            <person name="Cheng J."/>
            <person name="Wang W."/>
            <person name="Wang J."/>
            <person name="Qian W."/>
            <person name="Li D."/>
            <person name="Wang L."/>
        </authorList>
    </citation>
    <scope>NUCLEOTIDE SEQUENCE [LARGE SCALE GENOMIC DNA]</scope>
    <source>
        <strain>ATCC 39541 / Classical Ogawa 395 / O395</strain>
    </source>
</reference>
<comment type="function">
    <text evidence="1">Reversibly transfers an adenylyl group from ATP to 4'-phosphopantetheine, yielding dephospho-CoA (dPCoA) and pyrophosphate.</text>
</comment>
<comment type="catalytic activity">
    <reaction evidence="1">
        <text>(R)-4'-phosphopantetheine + ATP + H(+) = 3'-dephospho-CoA + diphosphate</text>
        <dbReference type="Rhea" id="RHEA:19801"/>
        <dbReference type="ChEBI" id="CHEBI:15378"/>
        <dbReference type="ChEBI" id="CHEBI:30616"/>
        <dbReference type="ChEBI" id="CHEBI:33019"/>
        <dbReference type="ChEBI" id="CHEBI:57328"/>
        <dbReference type="ChEBI" id="CHEBI:61723"/>
        <dbReference type="EC" id="2.7.7.3"/>
    </reaction>
</comment>
<comment type="cofactor">
    <cofactor evidence="1">
        <name>Mg(2+)</name>
        <dbReference type="ChEBI" id="CHEBI:18420"/>
    </cofactor>
</comment>
<comment type="pathway">
    <text evidence="1">Cofactor biosynthesis; coenzyme A biosynthesis; CoA from (R)-pantothenate: step 4/5.</text>
</comment>
<comment type="subunit">
    <text evidence="1">Homohexamer.</text>
</comment>
<comment type="subcellular location">
    <subcellularLocation>
        <location evidence="1">Cytoplasm</location>
    </subcellularLocation>
</comment>
<comment type="similarity">
    <text evidence="1">Belongs to the bacterial CoaD family.</text>
</comment>
<protein>
    <recommendedName>
        <fullName evidence="1">Phosphopantetheine adenylyltransferase</fullName>
        <ecNumber evidence="1">2.7.7.3</ecNumber>
    </recommendedName>
    <alternativeName>
        <fullName evidence="1">Dephospho-CoA pyrophosphorylase</fullName>
    </alternativeName>
    <alternativeName>
        <fullName evidence="1">Pantetheine-phosphate adenylyltransferase</fullName>
        <shortName evidence="1">PPAT</shortName>
    </alternativeName>
</protein>
<sequence length="164" mass="18264">MSQKRLSRVIYPGTFDPITNGHLDLIERAAQMFDEVIIAVAASPSKNTLFTLEERVEFARQVTSHLDNVSAKGFSGLLVDFAKAEKANVLIRGLRTTVDFEYEFGLTNMYRRLMPGLESVFLTPAEEHAFISSTLVREVAIHGGNVDEFVPAIVANALHQKKKI</sequence>
<name>COAD_VIBC3</name>
<feature type="chain" id="PRO_1000071525" description="Phosphopantetheine adenylyltransferase">
    <location>
        <begin position="1"/>
        <end position="164"/>
    </location>
</feature>
<feature type="binding site" evidence="1">
    <location>
        <begin position="14"/>
        <end position="15"/>
    </location>
    <ligand>
        <name>ATP</name>
        <dbReference type="ChEBI" id="CHEBI:30616"/>
    </ligand>
</feature>
<feature type="binding site" evidence="1">
    <location>
        <position position="14"/>
    </location>
    <ligand>
        <name>substrate</name>
    </ligand>
</feature>
<feature type="binding site" evidence="1">
    <location>
        <position position="22"/>
    </location>
    <ligand>
        <name>ATP</name>
        <dbReference type="ChEBI" id="CHEBI:30616"/>
    </ligand>
</feature>
<feature type="binding site" evidence="1">
    <location>
        <position position="46"/>
    </location>
    <ligand>
        <name>substrate</name>
    </ligand>
</feature>
<feature type="binding site" evidence="1">
    <location>
        <position position="78"/>
    </location>
    <ligand>
        <name>substrate</name>
    </ligand>
</feature>
<feature type="binding site" evidence="1">
    <location>
        <position position="92"/>
    </location>
    <ligand>
        <name>substrate</name>
    </ligand>
</feature>
<feature type="binding site" evidence="1">
    <location>
        <begin position="93"/>
        <end position="95"/>
    </location>
    <ligand>
        <name>ATP</name>
        <dbReference type="ChEBI" id="CHEBI:30616"/>
    </ligand>
</feature>
<feature type="binding site" evidence="1">
    <location>
        <position position="103"/>
    </location>
    <ligand>
        <name>ATP</name>
        <dbReference type="ChEBI" id="CHEBI:30616"/>
    </ligand>
</feature>
<feature type="binding site" evidence="1">
    <location>
        <begin position="128"/>
        <end position="134"/>
    </location>
    <ligand>
        <name>ATP</name>
        <dbReference type="ChEBI" id="CHEBI:30616"/>
    </ligand>
</feature>
<feature type="site" description="Transition state stabilizer" evidence="1">
    <location>
        <position position="22"/>
    </location>
</feature>
<accession>A5F408</accession>
<accession>C3M3A0</accession>